<reference key="1">
    <citation type="journal article" date="2003" name="Proc. Natl. Acad. Sci. U.S.A.">
        <title>The complete genome sequence of Mycobacterium bovis.</title>
        <authorList>
            <person name="Garnier T."/>
            <person name="Eiglmeier K."/>
            <person name="Camus J.-C."/>
            <person name="Medina N."/>
            <person name="Mansoor H."/>
            <person name="Pryor M."/>
            <person name="Duthoy S."/>
            <person name="Grondin S."/>
            <person name="Lacroix C."/>
            <person name="Monsempe C."/>
            <person name="Simon S."/>
            <person name="Harris B."/>
            <person name="Atkin R."/>
            <person name="Doggett J."/>
            <person name="Mayes R."/>
            <person name="Keating L."/>
            <person name="Wheeler P.R."/>
            <person name="Parkhill J."/>
            <person name="Barrell B.G."/>
            <person name="Cole S.T."/>
            <person name="Gordon S.V."/>
            <person name="Hewinson R.G."/>
        </authorList>
    </citation>
    <scope>NUCLEOTIDE SEQUENCE [LARGE SCALE GENOMIC DNA]</scope>
    <source>
        <strain>ATCC BAA-935 / AF2122/97</strain>
    </source>
</reference>
<reference key="2">
    <citation type="journal article" date="2017" name="Genome Announc.">
        <title>Updated reference genome sequence and annotation of Mycobacterium bovis AF2122/97.</title>
        <authorList>
            <person name="Malone K.M."/>
            <person name="Farrell D."/>
            <person name="Stuber T.P."/>
            <person name="Schubert O.T."/>
            <person name="Aebersold R."/>
            <person name="Robbe-Austerman S."/>
            <person name="Gordon S.V."/>
        </authorList>
    </citation>
    <scope>NUCLEOTIDE SEQUENCE [LARGE SCALE GENOMIC DNA]</scope>
    <scope>GENOME REANNOTATION</scope>
    <source>
        <strain>ATCC BAA-935 / AF2122/97</strain>
    </source>
</reference>
<proteinExistence type="inferred from homology"/>
<accession>P66792</accession>
<accession>A0A1R3XYD9</accession>
<accession>O06819</accession>
<accession>X2BI51</accession>
<protein>
    <recommendedName>
        <fullName>Probable protein-export membrane protein SecG</fullName>
    </recommendedName>
</protein>
<evidence type="ECO:0000250" key="1"/>
<evidence type="ECO:0000255" key="2"/>
<evidence type="ECO:0000305" key="3"/>
<sequence length="77" mass="8163">MELALQITLIVTSVLVVLLVLLHRAKGGGLSTLFGGGVQSSLSGSTVVEKNLDRLTLFVTGIWLVSIIGVALLIKYR</sequence>
<organism>
    <name type="scientific">Mycobacterium bovis (strain ATCC BAA-935 / AF2122/97)</name>
    <dbReference type="NCBI Taxonomy" id="233413"/>
    <lineage>
        <taxon>Bacteria</taxon>
        <taxon>Bacillati</taxon>
        <taxon>Actinomycetota</taxon>
        <taxon>Actinomycetes</taxon>
        <taxon>Mycobacteriales</taxon>
        <taxon>Mycobacteriaceae</taxon>
        <taxon>Mycobacterium</taxon>
        <taxon>Mycobacterium tuberculosis complex</taxon>
    </lineage>
</organism>
<dbReference type="EMBL" id="LT708304">
    <property type="protein sequence ID" value="SIU00078.1"/>
    <property type="molecule type" value="Genomic_DNA"/>
</dbReference>
<dbReference type="RefSeq" id="NP_855127.1">
    <property type="nucleotide sequence ID" value="NC_002945.3"/>
</dbReference>
<dbReference type="RefSeq" id="WP_003407407.1">
    <property type="nucleotide sequence ID" value="NC_002945.4"/>
</dbReference>
<dbReference type="GeneID" id="45425418"/>
<dbReference type="KEGG" id="mbo:BQ2027_MB1475"/>
<dbReference type="PATRIC" id="fig|233413.5.peg.1611"/>
<dbReference type="Proteomes" id="UP000001419">
    <property type="component" value="Chromosome"/>
</dbReference>
<dbReference type="GO" id="GO:0005886">
    <property type="term" value="C:plasma membrane"/>
    <property type="evidence" value="ECO:0007669"/>
    <property type="project" value="UniProtKB-SubCell"/>
</dbReference>
<dbReference type="GO" id="GO:0015450">
    <property type="term" value="F:protein-transporting ATPase activity"/>
    <property type="evidence" value="ECO:0007669"/>
    <property type="project" value="InterPro"/>
</dbReference>
<dbReference type="GO" id="GO:0009306">
    <property type="term" value="P:protein secretion"/>
    <property type="evidence" value="ECO:0007669"/>
    <property type="project" value="InterPro"/>
</dbReference>
<dbReference type="InterPro" id="IPR004692">
    <property type="entry name" value="SecG"/>
</dbReference>
<dbReference type="NCBIfam" id="TIGR00810">
    <property type="entry name" value="secG"/>
    <property type="match status" value="1"/>
</dbReference>
<dbReference type="Pfam" id="PF03840">
    <property type="entry name" value="SecG"/>
    <property type="match status" value="1"/>
</dbReference>
<name>SECG_MYCBO</name>
<comment type="function">
    <text evidence="1">Involved in protein export. Participates in an early event of protein translocation (By similarity).</text>
</comment>
<comment type="subcellular location">
    <subcellularLocation>
        <location evidence="3">Cell membrane</location>
        <topology evidence="3">Multi-pass membrane protein</topology>
    </subcellularLocation>
</comment>
<comment type="similarity">
    <text evidence="3">Belongs to the SecG family.</text>
</comment>
<feature type="chain" id="PRO_0000157233" description="Probable protein-export membrane protein SecG">
    <location>
        <begin position="1"/>
        <end position="77"/>
    </location>
</feature>
<feature type="transmembrane region" description="Helical" evidence="2">
    <location>
        <begin position="3"/>
        <end position="23"/>
    </location>
</feature>
<feature type="transmembrane region" description="Helical" evidence="2">
    <location>
        <begin position="55"/>
        <end position="75"/>
    </location>
</feature>
<keyword id="KW-1003">Cell membrane</keyword>
<keyword id="KW-0472">Membrane</keyword>
<keyword id="KW-0653">Protein transport</keyword>
<keyword id="KW-1185">Reference proteome</keyword>
<keyword id="KW-0811">Translocation</keyword>
<keyword id="KW-0812">Transmembrane</keyword>
<keyword id="KW-1133">Transmembrane helix</keyword>
<keyword id="KW-0813">Transport</keyword>
<gene>
    <name type="primary">secG</name>
    <name type="ordered locus">BQ2027_MB1475</name>
</gene>